<comment type="function">
    <text evidence="4">Plays a role in cuticle calcification. May induce precipitation of the calcium stored in the posterior caeca as calcium carbonate.</text>
</comment>
<comment type="subcellular location">
    <subcellularLocation>
        <location evidence="4">Secreted</location>
    </subcellularLocation>
    <text>During the premolt period, localizes to microvilli-rich apical regions and to the subnuclear region. During the postmolt period, localizes to the intercellular space, basal region of cells and calcium reabsorption spherules.</text>
</comment>
<comment type="tissue specificity">
    <text evidence="2 4">Posterior caeca epithelium of the gut.</text>
</comment>
<comment type="developmental stage">
    <text evidence="2 4">Expression is detected at the start of the premolt period and accumulates during this period from D1'b to D3. After ecdysis, expressed in the postmolt period but at much lower levels. Not detected in the intermolt period.</text>
</comment>
<comment type="induction">
    <text evidence="2">Indirectly by 20-hydroxyecdysone.</text>
</comment>
<comment type="PTM">
    <text evidence="3">Phosphorylated on Ser and Tyr residues. Calcium-binding activity is dependent on serine phosphorylation but not on tyrosine phosphorylation.</text>
</comment>
<comment type="miscellaneous">
    <text evidence="3 5">Binds calcium.</text>
</comment>
<comment type="caution">
    <text evidence="7">N-terminal sequence obtained in PubMed:8620040 was later shown to be incomplete at the N-terminus.</text>
</comment>
<organism>
    <name type="scientific">Cryptorchestia cavimana</name>
    <name type="common">Amphipod</name>
    <name type="synonym">Orchestia cavimana</name>
    <dbReference type="NCBI Taxonomy" id="1577145"/>
    <lineage>
        <taxon>Eukaryota</taxon>
        <taxon>Metazoa</taxon>
        <taxon>Ecdysozoa</taxon>
        <taxon>Arthropoda</taxon>
        <taxon>Crustacea</taxon>
        <taxon>Multicrustacea</taxon>
        <taxon>Malacostraca</taxon>
        <taxon>Eumalacostraca</taxon>
        <taxon>Peracarida</taxon>
        <taxon>Amphipoda</taxon>
        <taxon>Senticaudata</taxon>
        <taxon>Talitrida</taxon>
        <taxon>Talitroidea</taxon>
        <taxon>Talitridae</taxon>
        <taxon>Cryptorchestia</taxon>
    </lineage>
</organism>
<feature type="signal peptide" evidence="2">
    <location>
        <begin position="1"/>
        <end position="20"/>
    </location>
</feature>
<feature type="chain" id="PRO_0000233934" description="Orchestin" evidence="2">
    <location>
        <begin position="21"/>
        <end position="128"/>
    </location>
</feature>
<feature type="region of interest" description="Disordered" evidence="1">
    <location>
        <begin position="23"/>
        <end position="95"/>
    </location>
</feature>
<feature type="compositionally biased region" description="Basic and acidic residues" evidence="1">
    <location>
        <begin position="30"/>
        <end position="49"/>
    </location>
</feature>
<feature type="compositionally biased region" description="Basic and acidic residues" evidence="1">
    <location>
        <begin position="56"/>
        <end position="81"/>
    </location>
</feature>
<feature type="compositionally biased region" description="Acidic residues" evidence="1">
    <location>
        <begin position="84"/>
        <end position="93"/>
    </location>
</feature>
<feature type="sequence conflict" description="In Ref. 2; AA sequence." evidence="6" ref="2">
    <original>S</original>
    <variation>D</variation>
    <location>
        <position position="25"/>
    </location>
</feature>
<feature type="sequence conflict" description="In Ref. 2; AA sequence." evidence="6" ref="2">
    <original>S</original>
    <variation>E</variation>
    <location>
        <position position="28"/>
    </location>
</feature>
<feature type="sequence conflict" description="In Ref. 2; AA sequence." evidence="6" ref="2">
    <original>D</original>
    <variation>DD</variation>
    <location>
        <position position="30"/>
    </location>
</feature>
<feature type="sequence conflict" description="In Ref. 2; AA sequence." evidence="6" ref="2">
    <original>L</original>
    <variation>R</variation>
    <location>
        <position position="33"/>
    </location>
</feature>
<evidence type="ECO:0000256" key="1">
    <source>
        <dbReference type="SAM" id="MobiDB-lite"/>
    </source>
</evidence>
<evidence type="ECO:0000269" key="2">
    <source>
    </source>
</evidence>
<evidence type="ECO:0000269" key="3">
    <source>
    </source>
</evidence>
<evidence type="ECO:0000269" key="4">
    <source>
    </source>
</evidence>
<evidence type="ECO:0000269" key="5">
    <source>
    </source>
</evidence>
<evidence type="ECO:0000305" key="6"/>
<evidence type="ECO:0000305" key="7">
    <source>
    </source>
</evidence>
<evidence type="ECO:0000312" key="8">
    <source>
        <dbReference type="EMBL" id="AAD32571.1"/>
    </source>
</evidence>
<proteinExistence type="evidence at protein level"/>
<accession>Q9XYT4</accession>
<protein>
    <recommendedName>
        <fullName>Orchestin</fullName>
    </recommendedName>
</protein>
<reference evidence="6 8" key="1">
    <citation type="journal article" date="2002" name="Biochem. J.">
        <title>Characterization and spatiotemporal expression of orchestin, a gene encoding an ecdysone-inducible protein from a crustacean organic matrix.</title>
        <authorList>
            <person name="Testeniere O."/>
            <person name="Hecker A."/>
            <person name="Le Gurun S."/>
            <person name="Quennedey B."/>
            <person name="Graf F."/>
            <person name="Luquet G."/>
        </authorList>
    </citation>
    <scope>NUCLEOTIDE SEQUENCE [GENOMIC DNA / MRNA]</scope>
    <scope>PROTEIN SEQUENCE OF N-TERMINUS</scope>
    <scope>PROTEIN SEQUENCE OF 109-119 AND 125-128</scope>
    <scope>TISSUE SPECIFICITY</scope>
    <scope>DEVELOPMENTAL STAGE</scope>
    <scope>INDUCTION</scope>
</reference>
<reference evidence="6" key="2">
    <citation type="journal article" date="1996" name="Biochim. Biophys. Acta">
        <title>Characterization and N-terminal sequencing of a calcium binding protein from the calcareous concretion organic matrix of the terrestrial crustacean Orchestia cavimana.</title>
        <authorList>
            <person name="Luquet G."/>
            <person name="Testeniere O."/>
            <person name="Graf F."/>
        </authorList>
    </citation>
    <scope>PROTEIN SEQUENCE OF 23-35</scope>
    <scope>CALCIUM-BINDING</scope>
</reference>
<reference evidence="6" key="3">
    <citation type="journal article" date="2003" name="FEBS Lett.">
        <title>Phosphorylation of serine residues is fundamental for the calcium-binding ability of orchestin, a soluble matrix protein from crustacean calcium storage structures.</title>
        <authorList>
            <person name="Hecker A."/>
            <person name="Testeniere O."/>
            <person name="Marin F."/>
            <person name="Luquet G."/>
        </authorList>
    </citation>
    <scope>PHOSPHORYLATION</scope>
    <scope>CALCIUM-BINDING</scope>
</reference>
<reference evidence="6" key="4">
    <citation type="journal article" date="2004" name="J. Struct. Biol.">
        <title>Orchestin, a calcium-binding phosphoprotein, is a matrix component of two successive transitory calcified biomineralizations cyclically elaborated by a terrestrial crustacean.</title>
        <authorList>
            <person name="Hecker A."/>
            <person name="Quennedey B."/>
            <person name="Testeniere O."/>
            <person name="Quennedey A."/>
            <person name="Graf F."/>
            <person name="Luquet G."/>
        </authorList>
    </citation>
    <scope>SUBCELLULAR LOCATION</scope>
    <scope>TISSUE SPECIFICITY</scope>
    <scope>DEVELOPMENTAL STAGE</scope>
    <scope>CALCIUM-BINDING</scope>
</reference>
<dbReference type="EMBL" id="AF124526">
    <property type="protein sequence ID" value="AAD32571.1"/>
    <property type="molecule type" value="Genomic_DNA"/>
</dbReference>
<dbReference type="SMR" id="Q9XYT4"/>
<dbReference type="GO" id="GO:0045178">
    <property type="term" value="C:basal part of cell"/>
    <property type="evidence" value="ECO:0000314"/>
    <property type="project" value="UniProtKB"/>
</dbReference>
<dbReference type="GO" id="GO:0005615">
    <property type="term" value="C:extracellular space"/>
    <property type="evidence" value="ECO:0000314"/>
    <property type="project" value="UniProtKB"/>
</dbReference>
<dbReference type="GO" id="GO:0005902">
    <property type="term" value="C:microvillus"/>
    <property type="evidence" value="ECO:0000314"/>
    <property type="project" value="UniProtKB"/>
</dbReference>
<dbReference type="GO" id="GO:0005509">
    <property type="term" value="F:calcium ion binding"/>
    <property type="evidence" value="ECO:0000314"/>
    <property type="project" value="UniProtKB"/>
</dbReference>
<dbReference type="GO" id="GO:0048589">
    <property type="term" value="P:developmental growth"/>
    <property type="evidence" value="ECO:0000314"/>
    <property type="project" value="UniProtKB"/>
</dbReference>
<dbReference type="GO" id="GO:0006874">
    <property type="term" value="P:intracellular calcium ion homeostasis"/>
    <property type="evidence" value="ECO:0000303"/>
    <property type="project" value="UniProtKB"/>
</dbReference>
<dbReference type="GO" id="GO:0009725">
    <property type="term" value="P:response to hormone"/>
    <property type="evidence" value="ECO:0000314"/>
    <property type="project" value="UniProtKB"/>
</dbReference>
<dbReference type="GO" id="GO:0031215">
    <property type="term" value="P:shell calcification"/>
    <property type="evidence" value="ECO:0000303"/>
    <property type="project" value="UniProtKB"/>
</dbReference>
<sequence>MNKVFIIGVCLFIVSQAVLAVPWDSDESSDERLSDRSDESREEPRKLVVSDDDSREDSNESAEVRRRDDSRESEEEPRKLSADTSDEDSDDSQESPLDLFFKTLRDSKISRAQRAALLKALLSRYAGY</sequence>
<keyword id="KW-0091">Biomineralization</keyword>
<keyword id="KW-0106">Calcium</keyword>
<keyword id="KW-0903">Direct protein sequencing</keyword>
<keyword id="KW-0964">Secreted</keyword>
<keyword id="KW-0732">Signal</keyword>
<name>ORCH_CRYCV</name>